<feature type="chain" id="PRO_0000179989" description="Transforming acidic coiled-coil-containing protein 2">
    <location>
        <begin position="1"/>
        <end position="1149"/>
    </location>
</feature>
<feature type="domain" description="SPAZ">
    <location>
        <begin position="508"/>
        <end position="596"/>
    </location>
</feature>
<feature type="region of interest" description="Disordered" evidence="4">
    <location>
        <begin position="1"/>
        <end position="73"/>
    </location>
</feature>
<feature type="region of interest" description="Disordered" evidence="4">
    <location>
        <begin position="91"/>
        <end position="227"/>
    </location>
</feature>
<feature type="region of interest" description="Disordered" evidence="4">
    <location>
        <begin position="247"/>
        <end position="430"/>
    </location>
</feature>
<feature type="region of interest" description="Disordered" evidence="4">
    <location>
        <begin position="463"/>
        <end position="617"/>
    </location>
</feature>
<feature type="region of interest" description="Disordered" evidence="4">
    <location>
        <begin position="636"/>
        <end position="665"/>
    </location>
</feature>
<feature type="region of interest" description="Disordered" evidence="4">
    <location>
        <begin position="696"/>
        <end position="719"/>
    </location>
</feature>
<feature type="region of interest" description="Disordered" evidence="4">
    <location>
        <begin position="756"/>
        <end position="780"/>
    </location>
</feature>
<feature type="coiled-coil region" evidence="3">
    <location>
        <begin position="877"/>
        <end position="905"/>
    </location>
</feature>
<feature type="coiled-coil region" evidence="3">
    <location>
        <begin position="948"/>
        <end position="1148"/>
    </location>
</feature>
<feature type="compositionally biased region" description="Polar residues" evidence="4">
    <location>
        <begin position="13"/>
        <end position="35"/>
    </location>
</feature>
<feature type="compositionally biased region" description="Low complexity" evidence="4">
    <location>
        <begin position="91"/>
        <end position="106"/>
    </location>
</feature>
<feature type="compositionally biased region" description="Pro residues" evidence="4">
    <location>
        <begin position="155"/>
        <end position="180"/>
    </location>
</feature>
<feature type="compositionally biased region" description="Polar residues" evidence="4">
    <location>
        <begin position="267"/>
        <end position="284"/>
    </location>
</feature>
<feature type="compositionally biased region" description="Polar residues" evidence="4">
    <location>
        <begin position="300"/>
        <end position="317"/>
    </location>
</feature>
<feature type="compositionally biased region" description="Basic residues" evidence="4">
    <location>
        <begin position="318"/>
        <end position="334"/>
    </location>
</feature>
<feature type="compositionally biased region" description="Basic and acidic residues" evidence="4">
    <location>
        <begin position="358"/>
        <end position="368"/>
    </location>
</feature>
<feature type="compositionally biased region" description="Basic residues" evidence="4">
    <location>
        <begin position="481"/>
        <end position="498"/>
    </location>
</feature>
<feature type="compositionally biased region" description="Polar residues" evidence="4">
    <location>
        <begin position="541"/>
        <end position="561"/>
    </location>
</feature>
<feature type="compositionally biased region" description="Low complexity" evidence="4">
    <location>
        <begin position="575"/>
        <end position="590"/>
    </location>
</feature>
<feature type="compositionally biased region" description="Low complexity" evidence="4">
    <location>
        <begin position="652"/>
        <end position="665"/>
    </location>
</feature>
<feature type="compositionally biased region" description="Polar residues" evidence="4">
    <location>
        <begin position="701"/>
        <end position="716"/>
    </location>
</feature>
<feature type="compositionally biased region" description="Polar residues" evidence="4">
    <location>
        <begin position="770"/>
        <end position="780"/>
    </location>
</feature>
<feature type="modified residue" description="Phosphoserine" evidence="2">
    <location>
        <position position="100"/>
    </location>
</feature>
<feature type="modified residue" description="Phosphoserine" evidence="2">
    <location>
        <position position="265"/>
    </location>
</feature>
<feature type="modified residue" description="Phosphoserine" evidence="12">
    <location>
        <position position="354"/>
    </location>
</feature>
<feature type="modified residue" description="Phosphoserine" evidence="2">
    <location>
        <position position="419"/>
    </location>
</feature>
<feature type="modified residue" description="Phosphothreonine" evidence="2">
    <location>
        <position position="439"/>
    </location>
</feature>
<feature type="modified residue" description="Phosphoserine" evidence="11 12">
    <location>
        <position position="510"/>
    </location>
</feature>
<feature type="modified residue" description="Phosphoserine" evidence="12">
    <location>
        <position position="514"/>
    </location>
</feature>
<feature type="modified residue" description="Phosphothreonine" evidence="12">
    <location>
        <position position="516"/>
    </location>
</feature>
<feature type="modified residue" description="Phosphoserine" evidence="12">
    <location>
        <position position="552"/>
    </location>
</feature>
<feature type="modified residue" description="Phosphoserine" evidence="2">
    <location>
        <position position="582"/>
    </location>
</feature>
<feature type="modified residue" description="Phosphoserine" evidence="12">
    <location>
        <position position="585"/>
    </location>
</feature>
<feature type="modified residue" description="Phosphoserine" evidence="2">
    <location>
        <position position="587"/>
    </location>
</feature>
<feature type="modified residue" description="Phosphoserine" evidence="2">
    <location>
        <position position="596"/>
    </location>
</feature>
<feature type="modified residue" description="Phosphothreonine" evidence="2">
    <location>
        <position position="632"/>
    </location>
</feature>
<feature type="modified residue" description="Phosphothreonine" evidence="2">
    <location>
        <position position="653"/>
    </location>
</feature>
<feature type="modified residue" description="Phosphothreonine" evidence="2">
    <location>
        <position position="657"/>
    </location>
</feature>
<feature type="modified residue" description="Phosphoserine" evidence="11 12">
    <location>
        <position position="714"/>
    </location>
</feature>
<feature type="modified residue" description="Phosphoserine" evidence="2">
    <location>
        <position position="736"/>
    </location>
</feature>
<feature type="modified residue" description="Phosphothreonine" evidence="12">
    <location>
        <position position="755"/>
    </location>
</feature>
<feature type="modified residue" description="Phosphoserine" evidence="2">
    <location>
        <position position="759"/>
    </location>
</feature>
<feature type="modified residue" description="Phosphoserine" evidence="2">
    <location>
        <position position="771"/>
    </location>
</feature>
<feature type="splice variant" id="VSP_022159" description="In isoform 4." evidence="7">
    <location>
        <begin position="1"/>
        <end position="489"/>
    </location>
</feature>
<feature type="splice variant" id="VSP_022160" description="In isoform 2 and isoform 3." evidence="8 9">
    <location>
        <begin position="1"/>
        <end position="114"/>
    </location>
</feature>
<feature type="splice variant" id="VSP_022161" description="In isoform 2 and isoform 3." evidence="8 9">
    <original>AAGPGVEVTPTGSPQHLAKNEPR</original>
    <variation>MGGSQSLQPAPASDLNLEVSEAM</variation>
    <location>
        <begin position="115"/>
        <end position="137"/>
    </location>
</feature>
<feature type="splice variant" id="VSP_022162" description="In isoform 3 and isoform 4." evidence="7 8">
    <location>
        <begin position="619"/>
        <end position="630"/>
    </location>
</feature>
<feature type="splice variant" id="VSP_022163" description="In isoform 4." evidence="7">
    <original>E</original>
    <variation>EGKQLGGQPDPHLALENTVPRGQRARK</variation>
    <location>
        <position position="717"/>
    </location>
</feature>
<feature type="splice variant" id="VSP_022164" description="In isoform 3 and isoform 4." evidence="7 8">
    <location>
        <begin position="835"/>
        <end position="911"/>
    </location>
</feature>
<feature type="splice variant" id="VSP_022165" description="In isoform 3 and isoform 4." evidence="7 8">
    <original>PGTERKIL</original>
    <variation>EDEQREKSI</variation>
    <location>
        <begin position="1000"/>
        <end position="1007"/>
    </location>
</feature>
<feature type="sequence conflict" description="In Ref. 3; BAC34486." evidence="10" ref="3">
    <original>Q</original>
    <variation>K</variation>
    <location>
        <position position="681"/>
    </location>
</feature>
<feature type="sequence conflict" description="In Ref. 3; BAC34486." evidence="10" ref="3">
    <original>NKEI</original>
    <variation>DKQR</variation>
    <location>
        <begin position="1129"/>
        <end position="1132"/>
    </location>
</feature>
<name>TACC2_MOUSE</name>
<reference key="1">
    <citation type="journal article" date="2004" name="BMC Evol. Biol.">
        <title>Structure-function evolution of the transforming acidic coiled coil genes revealed by analysis of phylogenetically diverse organisms.</title>
        <authorList>
            <person name="Still I.H."/>
            <person name="Vettaikkorumakankauv A.K."/>
            <person name="DiMatteo A."/>
            <person name="Liang P."/>
        </authorList>
    </citation>
    <scope>NUCLEOTIDE SEQUENCE [MRNA] (ISOFORM 1)</scope>
    <source>
        <strain>C57BL/6J</strain>
    </source>
</reference>
<reference key="2">
    <citation type="submission" date="2000-04" db="EMBL/GenBank/DDBJ databases">
        <title>Isolation of full-length cDNA clones from mouse brain cDNA library made by oligo-capping method.</title>
        <authorList>
            <person name="Osada N."/>
            <person name="Kusuda J."/>
            <person name="Tanuma R."/>
            <person name="Ito A."/>
            <person name="Hirata M."/>
            <person name="Sugano S."/>
            <person name="Hashimoto K."/>
        </authorList>
    </citation>
    <scope>NUCLEOTIDE SEQUENCE [LARGE SCALE MRNA] (ISOFORM 2)</scope>
    <source>
        <strain>C57BL/6J</strain>
        <tissue>Brain</tissue>
    </source>
</reference>
<reference key="3">
    <citation type="journal article" date="2005" name="Science">
        <title>The transcriptional landscape of the mammalian genome.</title>
        <authorList>
            <person name="Carninci P."/>
            <person name="Kasukawa T."/>
            <person name="Katayama S."/>
            <person name="Gough J."/>
            <person name="Frith M.C."/>
            <person name="Maeda N."/>
            <person name="Oyama R."/>
            <person name="Ravasi T."/>
            <person name="Lenhard B."/>
            <person name="Wells C."/>
            <person name="Kodzius R."/>
            <person name="Shimokawa K."/>
            <person name="Bajic V.B."/>
            <person name="Brenner S.E."/>
            <person name="Batalov S."/>
            <person name="Forrest A.R."/>
            <person name="Zavolan M."/>
            <person name="Davis M.J."/>
            <person name="Wilming L.G."/>
            <person name="Aidinis V."/>
            <person name="Allen J.E."/>
            <person name="Ambesi-Impiombato A."/>
            <person name="Apweiler R."/>
            <person name="Aturaliya R.N."/>
            <person name="Bailey T.L."/>
            <person name="Bansal M."/>
            <person name="Baxter L."/>
            <person name="Beisel K.W."/>
            <person name="Bersano T."/>
            <person name="Bono H."/>
            <person name="Chalk A.M."/>
            <person name="Chiu K.P."/>
            <person name="Choudhary V."/>
            <person name="Christoffels A."/>
            <person name="Clutterbuck D.R."/>
            <person name="Crowe M.L."/>
            <person name="Dalla E."/>
            <person name="Dalrymple B.P."/>
            <person name="de Bono B."/>
            <person name="Della Gatta G."/>
            <person name="di Bernardo D."/>
            <person name="Down T."/>
            <person name="Engstrom P."/>
            <person name="Fagiolini M."/>
            <person name="Faulkner G."/>
            <person name="Fletcher C.F."/>
            <person name="Fukushima T."/>
            <person name="Furuno M."/>
            <person name="Futaki S."/>
            <person name="Gariboldi M."/>
            <person name="Georgii-Hemming P."/>
            <person name="Gingeras T.R."/>
            <person name="Gojobori T."/>
            <person name="Green R.E."/>
            <person name="Gustincich S."/>
            <person name="Harbers M."/>
            <person name="Hayashi Y."/>
            <person name="Hensch T.K."/>
            <person name="Hirokawa N."/>
            <person name="Hill D."/>
            <person name="Huminiecki L."/>
            <person name="Iacono M."/>
            <person name="Ikeo K."/>
            <person name="Iwama A."/>
            <person name="Ishikawa T."/>
            <person name="Jakt M."/>
            <person name="Kanapin A."/>
            <person name="Katoh M."/>
            <person name="Kawasawa Y."/>
            <person name="Kelso J."/>
            <person name="Kitamura H."/>
            <person name="Kitano H."/>
            <person name="Kollias G."/>
            <person name="Krishnan S.P."/>
            <person name="Kruger A."/>
            <person name="Kummerfeld S.K."/>
            <person name="Kurochkin I.V."/>
            <person name="Lareau L.F."/>
            <person name="Lazarevic D."/>
            <person name="Lipovich L."/>
            <person name="Liu J."/>
            <person name="Liuni S."/>
            <person name="McWilliam S."/>
            <person name="Madan Babu M."/>
            <person name="Madera M."/>
            <person name="Marchionni L."/>
            <person name="Matsuda H."/>
            <person name="Matsuzawa S."/>
            <person name="Miki H."/>
            <person name="Mignone F."/>
            <person name="Miyake S."/>
            <person name="Morris K."/>
            <person name="Mottagui-Tabar S."/>
            <person name="Mulder N."/>
            <person name="Nakano N."/>
            <person name="Nakauchi H."/>
            <person name="Ng P."/>
            <person name="Nilsson R."/>
            <person name="Nishiguchi S."/>
            <person name="Nishikawa S."/>
            <person name="Nori F."/>
            <person name="Ohara O."/>
            <person name="Okazaki Y."/>
            <person name="Orlando V."/>
            <person name="Pang K.C."/>
            <person name="Pavan W.J."/>
            <person name="Pavesi G."/>
            <person name="Pesole G."/>
            <person name="Petrovsky N."/>
            <person name="Piazza S."/>
            <person name="Reed J."/>
            <person name="Reid J.F."/>
            <person name="Ring B.Z."/>
            <person name="Ringwald M."/>
            <person name="Rost B."/>
            <person name="Ruan Y."/>
            <person name="Salzberg S.L."/>
            <person name="Sandelin A."/>
            <person name="Schneider C."/>
            <person name="Schoenbach C."/>
            <person name="Sekiguchi K."/>
            <person name="Semple C.A."/>
            <person name="Seno S."/>
            <person name="Sessa L."/>
            <person name="Sheng Y."/>
            <person name="Shibata Y."/>
            <person name="Shimada H."/>
            <person name="Shimada K."/>
            <person name="Silva D."/>
            <person name="Sinclair B."/>
            <person name="Sperling S."/>
            <person name="Stupka E."/>
            <person name="Sugiura K."/>
            <person name="Sultana R."/>
            <person name="Takenaka Y."/>
            <person name="Taki K."/>
            <person name="Tammoja K."/>
            <person name="Tan S.L."/>
            <person name="Tang S."/>
            <person name="Taylor M.S."/>
            <person name="Tegner J."/>
            <person name="Teichmann S.A."/>
            <person name="Ueda H.R."/>
            <person name="van Nimwegen E."/>
            <person name="Verardo R."/>
            <person name="Wei C.L."/>
            <person name="Yagi K."/>
            <person name="Yamanishi H."/>
            <person name="Zabarovsky E."/>
            <person name="Zhu S."/>
            <person name="Zimmer A."/>
            <person name="Hide W."/>
            <person name="Bult C."/>
            <person name="Grimmond S.M."/>
            <person name="Teasdale R.D."/>
            <person name="Liu E.T."/>
            <person name="Brusic V."/>
            <person name="Quackenbush J."/>
            <person name="Wahlestedt C."/>
            <person name="Mattick J.S."/>
            <person name="Hume D.A."/>
            <person name="Kai C."/>
            <person name="Sasaki D."/>
            <person name="Tomaru Y."/>
            <person name="Fukuda S."/>
            <person name="Kanamori-Katayama M."/>
            <person name="Suzuki M."/>
            <person name="Aoki J."/>
            <person name="Arakawa T."/>
            <person name="Iida J."/>
            <person name="Imamura K."/>
            <person name="Itoh M."/>
            <person name="Kato T."/>
            <person name="Kawaji H."/>
            <person name="Kawagashira N."/>
            <person name="Kawashima T."/>
            <person name="Kojima M."/>
            <person name="Kondo S."/>
            <person name="Konno H."/>
            <person name="Nakano K."/>
            <person name="Ninomiya N."/>
            <person name="Nishio T."/>
            <person name="Okada M."/>
            <person name="Plessy C."/>
            <person name="Shibata K."/>
            <person name="Shiraki T."/>
            <person name="Suzuki S."/>
            <person name="Tagami M."/>
            <person name="Waki K."/>
            <person name="Watahiki A."/>
            <person name="Okamura-Oho Y."/>
            <person name="Suzuki H."/>
            <person name="Kawai J."/>
            <person name="Hayashizaki Y."/>
        </authorList>
    </citation>
    <scope>NUCLEOTIDE SEQUENCE [LARGE SCALE MRNA] (ISOFORM 3)</scope>
    <source>
        <strain>C57BL/6J</strain>
        <tissue>Embryo</tissue>
    </source>
</reference>
<reference key="4">
    <citation type="journal article" date="2004" name="Genome Res.">
        <title>The status, quality, and expansion of the NIH full-length cDNA project: the Mammalian Gene Collection (MGC).</title>
        <authorList>
            <consortium name="The MGC Project Team"/>
        </authorList>
    </citation>
    <scope>NUCLEOTIDE SEQUENCE [LARGE SCALE MRNA] (ISOFORM 4)</scope>
    <source>
        <strain>Czech II</strain>
        <tissue>Mammary gland</tissue>
    </source>
</reference>
<reference key="5">
    <citation type="journal article" date="2004" name="Mol. Cell. Biol.">
        <title>The centrosomal, putative tumor suppressor protein TACC2 is dispensable for normal development, and deficiency does not lead to cancer.</title>
        <authorList>
            <person name="Schuendeln M.M."/>
            <person name="Piekorz R.P."/>
            <person name="Wichmann C."/>
            <person name="Lee Y."/>
            <person name="McKinnon P.J."/>
            <person name="Boyd K."/>
            <person name="Takahashi Y."/>
            <person name="Ihle J.N."/>
        </authorList>
    </citation>
    <scope>FUNCTION</scope>
    <scope>TISSUE SPECIFICITY</scope>
    <scope>DISRUPTION PHENOTYPE</scope>
</reference>
<reference key="6">
    <citation type="journal article" date="2007" name="Neuron">
        <title>Cep120 and TACCs control interkinetic nuclear migration and the neural progenitor pool.</title>
        <authorList>
            <person name="Xie Z."/>
            <person name="Moy L.Y."/>
            <person name="Sanada K."/>
            <person name="Zhou Y."/>
            <person name="Buchman J.J."/>
            <person name="Tsai L.-H."/>
        </authorList>
    </citation>
    <scope>FUNCTION</scope>
    <scope>INTERACTION WITH CCDC100</scope>
    <scope>SUBCELLULAR LOCATION</scope>
</reference>
<reference key="7">
    <citation type="journal article" date="2007" name="Proc. Natl. Acad. Sci. U.S.A.">
        <title>Large-scale phosphorylation analysis of mouse liver.</title>
        <authorList>
            <person name="Villen J."/>
            <person name="Beausoleil S.A."/>
            <person name="Gerber S.A."/>
            <person name="Gygi S.P."/>
        </authorList>
    </citation>
    <scope>PHOSPHORYLATION [LARGE SCALE ANALYSIS] AT SER-510 AND SER-714</scope>
    <scope>IDENTIFICATION BY MASS SPECTROMETRY [LARGE SCALE ANALYSIS]</scope>
    <source>
        <tissue>Liver</tissue>
    </source>
</reference>
<reference key="8">
    <citation type="journal article" date="2010" name="Cell">
        <title>A tissue-specific atlas of mouse protein phosphorylation and expression.</title>
        <authorList>
            <person name="Huttlin E.L."/>
            <person name="Jedrychowski M.P."/>
            <person name="Elias J.E."/>
            <person name="Goswami T."/>
            <person name="Rad R."/>
            <person name="Beausoleil S.A."/>
            <person name="Villen J."/>
            <person name="Haas W."/>
            <person name="Sowa M.E."/>
            <person name="Gygi S.P."/>
        </authorList>
    </citation>
    <scope>PHOSPHORYLATION [LARGE SCALE ANALYSIS] AT SER-354; SER-510; SER-514; THR-516; SER-552; SER-585; SER-714 AND THR-755</scope>
    <scope>IDENTIFICATION BY MASS SPECTROMETRY [LARGE SCALE ANALYSIS]</scope>
    <source>
        <tissue>Brain</tissue>
        <tissue>Brown adipose tissue</tissue>
        <tissue>Heart</tissue>
        <tissue>Kidney</tissue>
        <tissue>Lung</tissue>
        <tissue>Pancreas</tissue>
        <tissue>Testis</tissue>
    </source>
</reference>
<dbReference type="EMBL" id="AY177410">
    <property type="protein sequence ID" value="AAO18641.1"/>
    <property type="molecule type" value="mRNA"/>
</dbReference>
<dbReference type="EMBL" id="AB041546">
    <property type="protein sequence ID" value="BAA95031.1"/>
    <property type="molecule type" value="mRNA"/>
</dbReference>
<dbReference type="EMBL" id="AK050985">
    <property type="protein sequence ID" value="BAC34486.1"/>
    <property type="molecule type" value="mRNA"/>
</dbReference>
<dbReference type="EMBL" id="AK165603">
    <property type="protein sequence ID" value="BAE38287.1"/>
    <property type="molecule type" value="mRNA"/>
</dbReference>
<dbReference type="EMBL" id="BC004057">
    <property type="protein sequence ID" value="AAH04057.1"/>
    <property type="molecule type" value="mRNA"/>
</dbReference>
<dbReference type="CCDS" id="CCDS85432.1">
    <molecule id="Q9JJG0-3"/>
</dbReference>
<dbReference type="RefSeq" id="NP_001334566.1">
    <molecule id="Q9JJG0-3"/>
    <property type="nucleotide sequence ID" value="NM_001347637.2"/>
</dbReference>
<dbReference type="RefSeq" id="NP_067289.2">
    <property type="nucleotide sequence ID" value="NM_021314.4"/>
</dbReference>
<dbReference type="RefSeq" id="NP_996738.2">
    <property type="nucleotide sequence ID" value="NM_206856.3"/>
</dbReference>
<dbReference type="SMR" id="Q9JJG0"/>
<dbReference type="BioGRID" id="208314">
    <property type="interactions" value="3"/>
</dbReference>
<dbReference type="FunCoup" id="Q9JJG0">
    <property type="interactions" value="354"/>
</dbReference>
<dbReference type="IntAct" id="Q9JJG0">
    <property type="interactions" value="1"/>
</dbReference>
<dbReference type="STRING" id="10090.ENSMUSP00000081561"/>
<dbReference type="GlyGen" id="Q9JJG0">
    <property type="glycosylation" value="2 sites, 1 N-linked glycan (1 site)"/>
</dbReference>
<dbReference type="iPTMnet" id="Q9JJG0"/>
<dbReference type="jPOST" id="Q9JJG0"/>
<dbReference type="PaxDb" id="10090-ENSMUSP00000081561"/>
<dbReference type="PeptideAtlas" id="Q9JJG0"/>
<dbReference type="ProteomicsDB" id="263057">
    <molecule id="Q9JJG0-1"/>
</dbReference>
<dbReference type="ProteomicsDB" id="263058">
    <molecule id="Q9JJG0-2"/>
</dbReference>
<dbReference type="ProteomicsDB" id="263059">
    <molecule id="Q9JJG0-3"/>
</dbReference>
<dbReference type="ProteomicsDB" id="263060">
    <molecule id="Q9JJG0-4"/>
</dbReference>
<dbReference type="Pumba" id="Q9JJG0"/>
<dbReference type="Antibodypedia" id="46332">
    <property type="antibodies" value="282 antibodies from 20 providers"/>
</dbReference>
<dbReference type="DNASU" id="57752"/>
<dbReference type="Ensembl" id="ENSMUST00000207282.2">
    <molecule id="Q9JJG0-3"/>
    <property type="protein sequence ID" value="ENSMUSP00000146848.2"/>
    <property type="gene ID" value="ENSMUSG00000030852.19"/>
</dbReference>
<dbReference type="GeneID" id="57752"/>
<dbReference type="KEGG" id="mmu:57752"/>
<dbReference type="UCSC" id="uc009kag.1">
    <molecule id="Q9JJG0-3"/>
    <property type="organism name" value="mouse"/>
</dbReference>
<dbReference type="UCSC" id="uc009kan.1">
    <molecule id="Q9JJG0-4"/>
    <property type="organism name" value="mouse"/>
</dbReference>
<dbReference type="AGR" id="MGI:1928899"/>
<dbReference type="CTD" id="10579"/>
<dbReference type="MGI" id="MGI:1928899">
    <property type="gene designation" value="Tacc2"/>
</dbReference>
<dbReference type="VEuPathDB" id="HostDB:ENSMUSG00000030852"/>
<dbReference type="eggNOG" id="ENOG502QUT1">
    <property type="taxonomic scope" value="Eukaryota"/>
</dbReference>
<dbReference type="GeneTree" id="ENSGT00940000157052"/>
<dbReference type="InParanoid" id="Q9JJG0"/>
<dbReference type="OrthoDB" id="10255048at2759"/>
<dbReference type="PhylomeDB" id="Q9JJG0"/>
<dbReference type="BioGRID-ORCS" id="57752">
    <property type="hits" value="1 hit in 75 CRISPR screens"/>
</dbReference>
<dbReference type="ChiTaRS" id="Tacc2">
    <property type="organism name" value="mouse"/>
</dbReference>
<dbReference type="PRO" id="PR:Q9JJG0"/>
<dbReference type="Proteomes" id="UP000000589">
    <property type="component" value="Chromosome 7"/>
</dbReference>
<dbReference type="RNAct" id="Q9JJG0">
    <property type="molecule type" value="protein"/>
</dbReference>
<dbReference type="Bgee" id="ENSMUSG00000030852">
    <property type="expression patterns" value="Expressed in hindlimb stylopod muscle and 262 other cell types or tissues"/>
</dbReference>
<dbReference type="ExpressionAtlas" id="Q9JJG0">
    <property type="expression patterns" value="baseline and differential"/>
</dbReference>
<dbReference type="GO" id="GO:0005813">
    <property type="term" value="C:centrosome"/>
    <property type="evidence" value="ECO:0007669"/>
    <property type="project" value="UniProtKB-SubCell"/>
</dbReference>
<dbReference type="GO" id="GO:0005737">
    <property type="term" value="C:cytoplasm"/>
    <property type="evidence" value="ECO:0007669"/>
    <property type="project" value="UniProtKB-SubCell"/>
</dbReference>
<dbReference type="GO" id="GO:0005634">
    <property type="term" value="C:nucleus"/>
    <property type="evidence" value="ECO:0007669"/>
    <property type="project" value="UniProtKB-SubCell"/>
</dbReference>
<dbReference type="GO" id="GO:0016922">
    <property type="term" value="F:nuclear receptor binding"/>
    <property type="evidence" value="ECO:0000266"/>
    <property type="project" value="MGI"/>
</dbReference>
<dbReference type="GO" id="GO:0019904">
    <property type="term" value="F:protein domain specific binding"/>
    <property type="evidence" value="ECO:0000353"/>
    <property type="project" value="MGI"/>
</dbReference>
<dbReference type="GO" id="GO:0030953">
    <property type="term" value="P:astral microtubule organization"/>
    <property type="evidence" value="ECO:0000314"/>
    <property type="project" value="MGI"/>
</dbReference>
<dbReference type="GO" id="GO:0008283">
    <property type="term" value="P:cell population proliferation"/>
    <property type="evidence" value="ECO:0000315"/>
    <property type="project" value="MGI"/>
</dbReference>
<dbReference type="GO" id="GO:0021987">
    <property type="term" value="P:cerebral cortex development"/>
    <property type="evidence" value="ECO:0000315"/>
    <property type="project" value="MGI"/>
</dbReference>
<dbReference type="GO" id="GO:0022027">
    <property type="term" value="P:interkinetic nuclear migration"/>
    <property type="evidence" value="ECO:0000315"/>
    <property type="project" value="MGI"/>
</dbReference>
<dbReference type="GO" id="GO:0000226">
    <property type="term" value="P:microtubule cytoskeleton organization"/>
    <property type="evidence" value="ECO:0000315"/>
    <property type="project" value="MGI"/>
</dbReference>
<dbReference type="GO" id="GO:0007052">
    <property type="term" value="P:mitotic spindle organization"/>
    <property type="evidence" value="ECO:0007669"/>
    <property type="project" value="InterPro"/>
</dbReference>
<dbReference type="GO" id="GO:0022008">
    <property type="term" value="P:neurogenesis"/>
    <property type="evidence" value="ECO:0000315"/>
    <property type="project" value="MGI"/>
</dbReference>
<dbReference type="GO" id="GO:0032886">
    <property type="term" value="P:regulation of microtubule-based process"/>
    <property type="evidence" value="ECO:0000315"/>
    <property type="project" value="MGI"/>
</dbReference>
<dbReference type="FunFam" id="1.20.5.1700:FF:000001">
    <property type="entry name" value="Transforming acidic coiled-coil-containing protein 1 isoform 2"/>
    <property type="match status" value="1"/>
</dbReference>
<dbReference type="Gene3D" id="1.20.5.1700">
    <property type="match status" value="1"/>
</dbReference>
<dbReference type="InterPro" id="IPR039915">
    <property type="entry name" value="TACC"/>
</dbReference>
<dbReference type="InterPro" id="IPR007707">
    <property type="entry name" value="TACC_C"/>
</dbReference>
<dbReference type="PANTHER" id="PTHR13924">
    <property type="entry name" value="TRANSFORMING ACIDIC COILED-COIL CONTAINING PROTEIN 1/2"/>
    <property type="match status" value="1"/>
</dbReference>
<dbReference type="PANTHER" id="PTHR13924:SF11">
    <property type="entry name" value="TRANSFORMING ACIDIC COILED-COIL-CONTAINING PROTEIN 2"/>
    <property type="match status" value="1"/>
</dbReference>
<dbReference type="Pfam" id="PF05010">
    <property type="entry name" value="TACC_C"/>
    <property type="match status" value="1"/>
</dbReference>
<organism>
    <name type="scientific">Mus musculus</name>
    <name type="common">Mouse</name>
    <dbReference type="NCBI Taxonomy" id="10090"/>
    <lineage>
        <taxon>Eukaryota</taxon>
        <taxon>Metazoa</taxon>
        <taxon>Chordata</taxon>
        <taxon>Craniata</taxon>
        <taxon>Vertebrata</taxon>
        <taxon>Euteleostomi</taxon>
        <taxon>Mammalia</taxon>
        <taxon>Eutheria</taxon>
        <taxon>Euarchontoglires</taxon>
        <taxon>Glires</taxon>
        <taxon>Rodentia</taxon>
        <taxon>Myomorpha</taxon>
        <taxon>Muroidea</taxon>
        <taxon>Muridae</taxon>
        <taxon>Murinae</taxon>
        <taxon>Mus</taxon>
        <taxon>Mus</taxon>
    </lineage>
</organism>
<gene>
    <name type="primary">Tacc2</name>
    <name type="ORF">MNCb-3527</name>
</gene>
<protein>
    <recommendedName>
        <fullName>Transforming acidic coiled-coil-containing protein 2</fullName>
    </recommendedName>
</protein>
<proteinExistence type="evidence at protein level"/>
<keyword id="KW-0025">Alternative splicing</keyword>
<keyword id="KW-0175">Coiled coil</keyword>
<keyword id="KW-0963">Cytoplasm</keyword>
<keyword id="KW-0206">Cytoskeleton</keyword>
<keyword id="KW-0539">Nucleus</keyword>
<keyword id="KW-0597">Phosphoprotein</keyword>
<keyword id="KW-1185">Reference proteome</keyword>
<comment type="function">
    <text evidence="1 5 6">Plays a role in the microtubule-dependent coupling of the nucleus and the centrosome. Involved in the processes that regulate centrosome-mediated interkinetic nuclear migration (INM) of neural progenitors. May play a role in organizing centrosomal microtubules (By similarity).</text>
</comment>
<comment type="subunit">
    <text evidence="1 6">Interacts with microtubules. Interacts with YEATS4, GCN5L2 and PCAF (By similarity). Interacts with CCDC100/CEP120.</text>
</comment>
<comment type="subcellular location">
    <subcellularLocation>
        <location evidence="2">Cytoplasm</location>
    </subcellularLocation>
    <subcellularLocation>
        <location evidence="2">Nucleus</location>
    </subcellularLocation>
    <subcellularLocation>
        <location evidence="2">Cytoplasm</location>
        <location evidence="2">Cytoskeleton</location>
        <location evidence="2">Microtubule organizing center</location>
        <location evidence="2">Centrosome</location>
    </subcellularLocation>
</comment>
<comment type="alternative products">
    <event type="alternative splicing"/>
    <isoform>
        <id>Q9JJG0-1</id>
        <name>1</name>
        <sequence type="displayed"/>
    </isoform>
    <isoform>
        <id>Q9JJG0-2</id>
        <name>2</name>
        <sequence type="described" ref="VSP_022160 VSP_022161"/>
    </isoform>
    <isoform>
        <id>Q9JJG0-3</id>
        <name>3</name>
        <sequence type="described" ref="VSP_022160 VSP_022161 VSP_022162 VSP_022164 VSP_022165"/>
    </isoform>
    <isoform>
        <id>Q9JJG0-4</id>
        <name>4</name>
        <sequence type="described" ref="VSP_022159 VSP_022162 VSP_022163 VSP_022164 VSP_022165"/>
    </isoform>
</comment>
<comment type="tissue specificity">
    <text evidence="5">Expressed in brain, kidney, lung, thymus and ovary. Not detectable in normal tissues at protein level.</text>
</comment>
<comment type="PTM">
    <text evidence="1">Phosphorylated; which is required for localization in centrosome.</text>
</comment>
<comment type="disruption phenotype">
    <text evidence="5">Mice develop normally, are fertile, and do not present elevated tumorization rates. Cells deficient in TACC2 divide normally and do not show any change in the frequency of apoptosis induction.</text>
</comment>
<comment type="similarity">
    <text evidence="10">Belongs to the TACC family.</text>
</comment>
<sequence length="1149" mass="124130">MGNENSTSDHQRTSSVQSPRSLQPPGKSQSLQKQQGDLPGSCAGSIPGTDDVIQPAAPVDPGHPPLAGIGSNQGEVCTSLQLSYTIVTVQSASPSAARASPAPLAPEHTASAPSAAGPGVEVTPTGSPQHLAKNEPRSSDSEEAFETPESTTPVKAPPAPPPPPPEVTPEPEVIDPPAPEEPGCISEPPVVVPDGPRSSESVEGSPFRPSHSSSAVFDEDKPIASSGTYNLDFDSIELVDNFQSLEPCSADSKGQECKVSTRRKSTESVPPSKSTLSRSLSLQASDFDGASCPGSPEAGTLTTDACGTGSNSASSTLKRTKKTRPPSLKKKQATKKPTETPPVKETQQEPGEESPVPSEEHLAPETKTESATPEGAGCTLSDDTPLESPAVPTATCPLTLESAEDVSPLVSGGGRVQNSPPVGRKSVPLTTASEAVEVTLSDSGGQEDLPAKGLSVRLEFDYSEDKGSWESQQENAPPTKKIGKKPVAKMPLRRPKMKKTPEKLDNTPASPPRSPTEPSDTPIAKGTYTFDIDKWDDPNFNPFSSTSKMQESPKLSQQSYNFDPDACEESLDPFKASSKTPSSPSKSPASFEIPASTTEADGDGLNKPAKKKKTPLKTMVEDVMSVCSLFDTFRVKKSPKRSPLSDPPSQDPTPAATPEAPSAISTVVHATDEEKLAVTSQKWTCMTVDLDADKQDFPQPSDLSNFVNETKFNSPSEELDYRNSYEIEYMEKLGSSLPQDDDTPKKQALYLMFDTPQESPVKSPPVRMSDSPTPCSGSSFEDTEALVNAATKLQHPVARGLPSSQEPLLQVPEKPSQKELEAMALGTPAEAIEITAPEGAFASADTLLSRLAHPASLCGALGYLEPDLAEKNPPVFAQKLQEELEFAVMRIEALKLARQIALASRSRQDTKREAAHPPDVSISKTALYSRIGSTEVEKPPGLLFQQPDLDSALQVARAEVIAKEREVSEWRDKYEESRREVVEMRKIVAEYEKTIAQMIPGTERKILSHQTVQQLVLEKEQALADLNSVEKSLADLFRRYEKMKEVLEGFRKNEEVLKKCAQEYLSRVKKEEQRYQALKVHAEEKLDRANAEIAQVRGKAQQEQAAYQASLRKEQLRVDALERTLEQKNKEIEELTKICDELIAKMGKS</sequence>
<evidence type="ECO:0000250" key="1"/>
<evidence type="ECO:0000250" key="2">
    <source>
        <dbReference type="UniProtKB" id="O95359"/>
    </source>
</evidence>
<evidence type="ECO:0000255" key="3"/>
<evidence type="ECO:0000256" key="4">
    <source>
        <dbReference type="SAM" id="MobiDB-lite"/>
    </source>
</evidence>
<evidence type="ECO:0000269" key="5">
    <source>
    </source>
</evidence>
<evidence type="ECO:0000269" key="6">
    <source>
    </source>
</evidence>
<evidence type="ECO:0000303" key="7">
    <source>
    </source>
</evidence>
<evidence type="ECO:0000303" key="8">
    <source>
    </source>
</evidence>
<evidence type="ECO:0000303" key="9">
    <source ref="2"/>
</evidence>
<evidence type="ECO:0000305" key="10"/>
<evidence type="ECO:0007744" key="11">
    <source>
    </source>
</evidence>
<evidence type="ECO:0007744" key="12">
    <source>
    </source>
</evidence>
<accession>Q9JJG0</accession>
<accession>Q3TN02</accession>
<accession>Q811U0</accession>
<accession>Q8BQD4</accession>
<accession>Q99KQ6</accession>